<dbReference type="EMBL" id="AK004938">
    <property type="protein sequence ID" value="BAB23683.1"/>
    <property type="molecule type" value="mRNA"/>
</dbReference>
<dbReference type="EMBL" id="AK028181">
    <property type="protein sequence ID" value="BAC25794.1"/>
    <property type="molecule type" value="mRNA"/>
</dbReference>
<dbReference type="EMBL" id="AK043260">
    <property type="protein sequence ID" value="BAC31507.1"/>
    <property type="molecule type" value="mRNA"/>
</dbReference>
<dbReference type="EMBL" id="AK075725">
    <property type="protein sequence ID" value="BAC35912.1"/>
    <property type="status" value="ALT_FRAME"/>
    <property type="molecule type" value="mRNA"/>
</dbReference>
<dbReference type="EMBL" id="AK161041">
    <property type="protein sequence ID" value="BAE36164.1"/>
    <property type="molecule type" value="mRNA"/>
</dbReference>
<dbReference type="EMBL" id="AK166161">
    <property type="protein sequence ID" value="BAE38604.1"/>
    <property type="molecule type" value="mRNA"/>
</dbReference>
<dbReference type="EMBL" id="AK169740">
    <property type="protein sequence ID" value="BAE41340.1"/>
    <property type="molecule type" value="mRNA"/>
</dbReference>
<dbReference type="EMBL" id="AL807249">
    <property type="protein sequence ID" value="CAM18860.1"/>
    <property type="molecule type" value="Genomic_DNA"/>
</dbReference>
<dbReference type="EMBL" id="AL807249">
    <property type="protein sequence ID" value="CAM18863.1"/>
    <property type="molecule type" value="Genomic_DNA"/>
</dbReference>
<dbReference type="EMBL" id="BC004053">
    <property type="protein sequence ID" value="AAH04053.1"/>
    <property type="molecule type" value="mRNA"/>
</dbReference>
<dbReference type="EMBL" id="BC020024">
    <property type="protein sequence ID" value="AAH20024.1"/>
    <property type="molecule type" value="mRNA"/>
</dbReference>
<dbReference type="EMBL" id="X99642">
    <property type="protein sequence ID" value="CAA67961.1"/>
    <property type="molecule type" value="mRNA"/>
</dbReference>
<dbReference type="CCDS" id="CCDS38927.1">
    <molecule id="Q3TEA8-1"/>
</dbReference>
<dbReference type="CCDS" id="CCDS51334.1">
    <molecule id="Q3TEA8-3"/>
</dbReference>
<dbReference type="RefSeq" id="NP_001116368.1">
    <molecule id="Q3TEA8-3"/>
    <property type="nucleotide sequence ID" value="NM_001122896.3"/>
</dbReference>
<dbReference type="RefSeq" id="NP_001116369.1">
    <molecule id="Q3TEA8-1"/>
    <property type="nucleotide sequence ID" value="NM_001122897.3"/>
</dbReference>
<dbReference type="RefSeq" id="NP_001272407.1">
    <molecule id="Q3TEA8-1"/>
    <property type="nucleotide sequence ID" value="NM_001285478.2"/>
</dbReference>
<dbReference type="RefSeq" id="NP_001272408.1">
    <property type="nucleotide sequence ID" value="NM_001285479.1"/>
</dbReference>
<dbReference type="RefSeq" id="NP_001272409.1">
    <property type="nucleotide sequence ID" value="NM_001285480.1"/>
</dbReference>
<dbReference type="RefSeq" id="NP_001272410.1">
    <molecule id="Q3TEA8-2"/>
    <property type="nucleotide sequence ID" value="NM_001285481.2"/>
</dbReference>
<dbReference type="RefSeq" id="NP_001343361.1">
    <molecule id="Q3TEA8-3"/>
    <property type="nucleotide sequence ID" value="NM_001356432.2"/>
</dbReference>
<dbReference type="RefSeq" id="NP_001407985.1">
    <molecule id="Q3TEA8-3"/>
    <property type="nucleotide sequence ID" value="NM_001421056.1"/>
</dbReference>
<dbReference type="RefSeq" id="NP_001407990.1">
    <molecule id="Q3TEA8-3"/>
    <property type="nucleotide sequence ID" value="NM_001421061.1"/>
</dbReference>
<dbReference type="RefSeq" id="NP_034600.2">
    <molecule id="Q3TEA8-1"/>
    <property type="nucleotide sequence ID" value="NM_010470.4"/>
</dbReference>
<dbReference type="RefSeq" id="XP_006538631.1">
    <molecule id="Q3TEA8-1"/>
    <property type="nucleotide sequence ID" value="XM_006538568.5"/>
</dbReference>
<dbReference type="RefSeq" id="XP_006538633.1">
    <property type="nucleotide sequence ID" value="XM_006538570.2"/>
</dbReference>
<dbReference type="RefSeq" id="XP_030109078.1">
    <molecule id="Q3TEA8-2"/>
    <property type="nucleotide sequence ID" value="XM_030253218.2"/>
</dbReference>
<dbReference type="RefSeq" id="XP_030109081.1">
    <molecule id="Q3TEA8-3"/>
    <property type="nucleotide sequence ID" value="XM_030253221.2"/>
</dbReference>
<dbReference type="RefSeq" id="XP_030109082.1">
    <molecule id="Q3TEA8-3"/>
    <property type="nucleotide sequence ID" value="XM_030253222.2"/>
</dbReference>
<dbReference type="SMR" id="Q3TEA8"/>
<dbReference type="BioGRID" id="200401">
    <property type="interactions" value="15"/>
</dbReference>
<dbReference type="FunCoup" id="Q3TEA8">
    <property type="interactions" value="4061"/>
</dbReference>
<dbReference type="IntAct" id="Q3TEA8">
    <property type="interactions" value="6"/>
</dbReference>
<dbReference type="MINT" id="Q3TEA8"/>
<dbReference type="STRING" id="10090.ENSMUSP00000132614"/>
<dbReference type="GlyGen" id="Q3TEA8">
    <property type="glycosylation" value="1 site, 1 O-linked glycan (1 site)"/>
</dbReference>
<dbReference type="iPTMnet" id="Q3TEA8"/>
<dbReference type="PhosphoSitePlus" id="Q3TEA8"/>
<dbReference type="SwissPalm" id="Q3TEA8"/>
<dbReference type="jPOST" id="Q3TEA8"/>
<dbReference type="PaxDb" id="10090-ENSMUSP00000101453"/>
<dbReference type="PeptideAtlas" id="Q3TEA8"/>
<dbReference type="ProteomicsDB" id="273133">
    <molecule id="Q3TEA8-1"/>
</dbReference>
<dbReference type="ProteomicsDB" id="273134">
    <molecule id="Q3TEA8-2"/>
</dbReference>
<dbReference type="ProteomicsDB" id="273135">
    <molecule id="Q3TEA8-3"/>
</dbReference>
<dbReference type="Pumba" id="Q3TEA8"/>
<dbReference type="Antibodypedia" id="29832">
    <property type="antibodies" value="81 antibodies from 21 providers"/>
</dbReference>
<dbReference type="DNASU" id="15441"/>
<dbReference type="Ensembl" id="ENSMUST00000030541.13">
    <molecule id="Q3TEA8-1"/>
    <property type="protein sequence ID" value="ENSMUSP00000030541.7"/>
    <property type="gene ID" value="ENSMUSG00000028759.14"/>
</dbReference>
<dbReference type="Ensembl" id="ENSMUST00000097836.10">
    <molecule id="Q3TEA8-3"/>
    <property type="protein sequence ID" value="ENSMUSP00000095447.4"/>
    <property type="gene ID" value="ENSMUSG00000028759.14"/>
</dbReference>
<dbReference type="Ensembl" id="ENSMUST00000165861.8">
    <molecule id="Q3TEA8-1"/>
    <property type="protein sequence ID" value="ENSMUSP00000132614.2"/>
    <property type="gene ID" value="ENSMUSG00000028759.14"/>
</dbReference>
<dbReference type="GeneID" id="15441"/>
<dbReference type="KEGG" id="mmu:15441"/>
<dbReference type="UCSC" id="uc008vkg.3">
    <molecule id="Q3TEA8-1"/>
    <property type="organism name" value="mouse"/>
</dbReference>
<dbReference type="UCSC" id="uc008vki.3">
    <molecule id="Q3TEA8-2"/>
    <property type="organism name" value="mouse"/>
</dbReference>
<dbReference type="AGR" id="MGI:109369"/>
<dbReference type="CTD" id="50809"/>
<dbReference type="MGI" id="MGI:109369">
    <property type="gene designation" value="Hp1bp3"/>
</dbReference>
<dbReference type="VEuPathDB" id="HostDB:ENSMUSG00000028759"/>
<dbReference type="eggNOG" id="KOG4012">
    <property type="taxonomic scope" value="Eukaryota"/>
</dbReference>
<dbReference type="GeneTree" id="ENSGT00940000155314"/>
<dbReference type="HOGENOM" id="CLU_035727_1_0_1"/>
<dbReference type="InParanoid" id="Q3TEA8"/>
<dbReference type="OMA" id="IQNCKER"/>
<dbReference type="PhylomeDB" id="Q3TEA8"/>
<dbReference type="TreeFam" id="TF106395"/>
<dbReference type="BioGRID-ORCS" id="15441">
    <property type="hits" value="5 hits in 78 CRISPR screens"/>
</dbReference>
<dbReference type="CD-CODE" id="CE726F99">
    <property type="entry name" value="Postsynaptic density"/>
</dbReference>
<dbReference type="ChiTaRS" id="Hp1bp3">
    <property type="organism name" value="mouse"/>
</dbReference>
<dbReference type="PRO" id="PR:Q3TEA8"/>
<dbReference type="Proteomes" id="UP000000589">
    <property type="component" value="Chromosome 4"/>
</dbReference>
<dbReference type="RNAct" id="Q3TEA8">
    <property type="molecule type" value="protein"/>
</dbReference>
<dbReference type="Bgee" id="ENSMUSG00000028759">
    <property type="expression patterns" value="Expressed in embryonic brain and 265 other cell types or tissues"/>
</dbReference>
<dbReference type="ExpressionAtlas" id="Q3TEA8">
    <property type="expression patterns" value="baseline and differential"/>
</dbReference>
<dbReference type="GO" id="GO:0005694">
    <property type="term" value="C:chromosome"/>
    <property type="evidence" value="ECO:0000250"/>
    <property type="project" value="UniProtKB"/>
</dbReference>
<dbReference type="GO" id="GO:0000786">
    <property type="term" value="C:nucleosome"/>
    <property type="evidence" value="ECO:0007669"/>
    <property type="project" value="InterPro"/>
</dbReference>
<dbReference type="GO" id="GO:0005634">
    <property type="term" value="C:nucleus"/>
    <property type="evidence" value="ECO:0000250"/>
    <property type="project" value="UniProtKB"/>
</dbReference>
<dbReference type="GO" id="GO:0003677">
    <property type="term" value="F:DNA binding"/>
    <property type="evidence" value="ECO:0000250"/>
    <property type="project" value="UniProtKB"/>
</dbReference>
<dbReference type="GO" id="GO:0031491">
    <property type="term" value="F:nucleosome binding"/>
    <property type="evidence" value="ECO:0000250"/>
    <property type="project" value="UniProtKB"/>
</dbReference>
<dbReference type="GO" id="GO:0030527">
    <property type="term" value="F:structural constituent of chromatin"/>
    <property type="evidence" value="ECO:0007669"/>
    <property type="project" value="InterPro"/>
</dbReference>
<dbReference type="GO" id="GO:0071456">
    <property type="term" value="P:cellular response to hypoxia"/>
    <property type="evidence" value="ECO:0000250"/>
    <property type="project" value="UniProtKB"/>
</dbReference>
<dbReference type="GO" id="GO:0070828">
    <property type="term" value="P:heterochromatin organization"/>
    <property type="evidence" value="ECO:0000250"/>
    <property type="project" value="UniProtKB"/>
</dbReference>
<dbReference type="GO" id="GO:0006334">
    <property type="term" value="P:nucleosome assembly"/>
    <property type="evidence" value="ECO:0007669"/>
    <property type="project" value="InterPro"/>
</dbReference>
<dbReference type="GO" id="GO:0042127">
    <property type="term" value="P:regulation of cell population proliferation"/>
    <property type="evidence" value="ECO:0000250"/>
    <property type="project" value="UniProtKB"/>
</dbReference>
<dbReference type="GO" id="GO:0006355">
    <property type="term" value="P:regulation of DNA-templated transcription"/>
    <property type="evidence" value="ECO:0000250"/>
    <property type="project" value="UniProtKB"/>
</dbReference>
<dbReference type="GO" id="GO:0097298">
    <property type="term" value="P:regulation of nucleus size"/>
    <property type="evidence" value="ECO:0000250"/>
    <property type="project" value="UniProtKB"/>
</dbReference>
<dbReference type="CDD" id="cd00073">
    <property type="entry name" value="H15"/>
    <property type="match status" value="1"/>
</dbReference>
<dbReference type="FunFam" id="1.10.10.10:FF:000228">
    <property type="entry name" value="heterochromatin protein 1-binding protein 3 isoform X1"/>
    <property type="match status" value="1"/>
</dbReference>
<dbReference type="FunFam" id="1.10.10.10:FF:000239">
    <property type="entry name" value="heterochromatin protein 1-binding protein 3 isoform X1"/>
    <property type="match status" value="1"/>
</dbReference>
<dbReference type="FunFam" id="1.10.10.10:FF:000276">
    <property type="entry name" value="heterochromatin protein 1-binding protein 3 isoform X1"/>
    <property type="match status" value="1"/>
</dbReference>
<dbReference type="Gene3D" id="1.10.10.10">
    <property type="entry name" value="Winged helix-like DNA-binding domain superfamily/Winged helix DNA-binding domain"/>
    <property type="match status" value="3"/>
</dbReference>
<dbReference type="InterPro" id="IPR005819">
    <property type="entry name" value="H1/H5"/>
</dbReference>
<dbReference type="InterPro" id="IPR005818">
    <property type="entry name" value="Histone_H1/H5_H15"/>
</dbReference>
<dbReference type="InterPro" id="IPR036388">
    <property type="entry name" value="WH-like_DNA-bd_sf"/>
</dbReference>
<dbReference type="InterPro" id="IPR036390">
    <property type="entry name" value="WH_DNA-bd_sf"/>
</dbReference>
<dbReference type="PANTHER" id="PTHR15832:SF1">
    <property type="entry name" value="HETEROCHROMATIN PROTEIN 1-BINDING PROTEIN 3"/>
    <property type="match status" value="1"/>
</dbReference>
<dbReference type="PANTHER" id="PTHR15832">
    <property type="entry name" value="SHC (SRC HOMOLOGY DOMAIN C-TERMINAL) ADAPTOR HOMOLOG"/>
    <property type="match status" value="1"/>
</dbReference>
<dbReference type="Pfam" id="PF00538">
    <property type="entry name" value="Linker_histone"/>
    <property type="match status" value="3"/>
</dbReference>
<dbReference type="PRINTS" id="PR00624">
    <property type="entry name" value="HISTONEH5"/>
</dbReference>
<dbReference type="SMART" id="SM00526">
    <property type="entry name" value="H15"/>
    <property type="match status" value="3"/>
</dbReference>
<dbReference type="SUPFAM" id="SSF46785">
    <property type="entry name" value="Winged helix' DNA-binding domain"/>
    <property type="match status" value="3"/>
</dbReference>
<dbReference type="PROSITE" id="PS51504">
    <property type="entry name" value="H15"/>
    <property type="match status" value="3"/>
</dbReference>
<gene>
    <name type="primary">Hp1bp3</name>
</gene>
<sequence length="554" mass="60867">MATDMSQGELIHPKALPLIVGAQLIHADKLGEKAEDTTMPIRRAVNSTRETPPKSKLAEGEEEKPEPDGSSEESISTVEEQENETPPATSSEAEQPKGEPESGEKEENNNKSAEEPKKDEKDQSKEKEKKVKKTIPAWATLSASQLARAQRQTPMASSPRPKMDAILTEAIKACFQKTGASVVAIRKYIIHKYPSLGLERRGYLLKQALKRELNRGVIRQVKGKGASGSFVVVQKSKPPQKSKNRKKGSALDPEPQVKLEDVLPLAFTRLCEPKEASYSLIRKYVSQYYPKLRVDIRPQLLKNALQRAVERGQLEQITGKGASGTFQLKKSGEKPLLGGSLMEYAILSAIAAMNEPKTCSTTALKKYVLENHPGANSNYQMHLLKKTLQKCEKNGWLEQISGKGFSGTFQLSFPYYPSPGVLFPKKESGGSDDEDEDDDDDESSEDSEDEEPPPKRSLQKKTPAKSQGKTASMKQRGSKPARKVPAAQRGKVRPLPKKAPPKAKTPARKARPSPSVIKKPSGSSSRKPIASARKEAKLPGKGKSAMKKSFKTKK</sequence>
<accession>Q3TEA8</accession>
<accession>A2AM64</accession>
<accession>A2AM68</accession>
<accession>Q3TM38</accession>
<accession>Q3TU07</accession>
<accession>Q61688</accession>
<accession>Q8BT17</accession>
<accession>Q8C6H2</accession>
<accession>Q8C911</accession>
<accession>Q8VE06</accession>
<accession>Q99KR0</accession>
<accession>Q9DBI1</accession>
<proteinExistence type="evidence at protein level"/>
<evidence type="ECO:0000250" key="1">
    <source>
        <dbReference type="UniProtKB" id="Q5SSJ5"/>
    </source>
</evidence>
<evidence type="ECO:0000250" key="2">
    <source>
        <dbReference type="UniProtKB" id="Q6P747"/>
    </source>
</evidence>
<evidence type="ECO:0000255" key="3">
    <source>
        <dbReference type="PROSITE-ProRule" id="PRU00837"/>
    </source>
</evidence>
<evidence type="ECO:0000256" key="4">
    <source>
        <dbReference type="SAM" id="MobiDB-lite"/>
    </source>
</evidence>
<evidence type="ECO:0000269" key="5">
    <source>
    </source>
</evidence>
<evidence type="ECO:0000303" key="6">
    <source>
    </source>
</evidence>
<evidence type="ECO:0000305" key="7"/>
<evidence type="ECO:0007744" key="8">
    <source>
    </source>
</evidence>
<evidence type="ECO:0007744" key="9">
    <source>
    </source>
</evidence>
<name>HP1B3_MOUSE</name>
<protein>
    <recommendedName>
        <fullName>Heterochromatin protein 1-binding protein 3</fullName>
    </recommendedName>
</protein>
<organism>
    <name type="scientific">Mus musculus</name>
    <name type="common">Mouse</name>
    <dbReference type="NCBI Taxonomy" id="10090"/>
    <lineage>
        <taxon>Eukaryota</taxon>
        <taxon>Metazoa</taxon>
        <taxon>Chordata</taxon>
        <taxon>Craniata</taxon>
        <taxon>Vertebrata</taxon>
        <taxon>Euteleostomi</taxon>
        <taxon>Mammalia</taxon>
        <taxon>Eutheria</taxon>
        <taxon>Euarchontoglires</taxon>
        <taxon>Glires</taxon>
        <taxon>Rodentia</taxon>
        <taxon>Myomorpha</taxon>
        <taxon>Muroidea</taxon>
        <taxon>Muridae</taxon>
        <taxon>Murinae</taxon>
        <taxon>Mus</taxon>
        <taxon>Mus</taxon>
    </lineage>
</organism>
<comment type="function">
    <text evidence="1 5">Component of heterochromatin that maintains heterochromatin integrity during G1/S progression and regulates the duration of G1 phase to critically influence cell proliferative capacity. May play a role in hypoxia-induced oncogenesis.</text>
</comment>
<comment type="subunit">
    <text evidence="1 5">Interacts (via PxVxL motif) with CBX5 (via Trp-174).</text>
</comment>
<comment type="subcellular location">
    <subcellularLocation>
        <location evidence="1">Nucleus</location>
    </subcellularLocation>
    <subcellularLocation>
        <location evidence="1">Chromosome</location>
    </subcellularLocation>
    <text evidence="1">localized in nuclei but not in nucleoli in interphase. Colocalized with chromosomes in mitosis, with a gradually increased during G1 progression and a maximum level during late G1 phase (G1/S).</text>
</comment>
<comment type="alternative products">
    <event type="alternative splicing"/>
    <isoform>
        <id>Q3TEA8-1</id>
        <name>1</name>
        <sequence type="displayed"/>
    </isoform>
    <isoform>
        <id>Q3TEA8-2</id>
        <name>2</name>
        <sequence type="described" ref="VSP_034175"/>
    </isoform>
    <isoform>
        <id>Q3TEA8-3</id>
        <name>3</name>
        <sequence type="described" ref="VSP_034174"/>
    </isoform>
</comment>
<comment type="domain">
    <text evidence="1">A central region that included the first H15 (linker histone H1/H5 globular) domain binds at the entry/exit site of the nucleosomal DNA.</text>
</comment>
<comment type="sequence caution" evidence="7">
    <conflict type="frameshift">
        <sequence resource="EMBL-CDS" id="BAC35912"/>
    </conflict>
</comment>
<keyword id="KW-0007">Acetylation</keyword>
<keyword id="KW-0025">Alternative splicing</keyword>
<keyword id="KW-0158">Chromosome</keyword>
<keyword id="KW-0238">DNA-binding</keyword>
<keyword id="KW-1017">Isopeptide bond</keyword>
<keyword id="KW-0539">Nucleus</keyword>
<keyword id="KW-0597">Phosphoprotein</keyword>
<keyword id="KW-1185">Reference proteome</keyword>
<keyword id="KW-0677">Repeat</keyword>
<keyword id="KW-0832">Ubl conjugation</keyword>
<feature type="initiator methionine" description="Removed" evidence="1">
    <location>
        <position position="1"/>
    </location>
</feature>
<feature type="chain" id="PRO_0000339643" description="Heterochromatin protein 1-binding protein 3">
    <location>
        <begin position="2"/>
        <end position="554"/>
    </location>
</feature>
<feature type="domain" description="H15 1" evidence="3">
    <location>
        <begin position="159"/>
        <end position="234"/>
    </location>
</feature>
<feature type="domain" description="H15 2" evidence="3">
    <location>
        <begin position="255"/>
        <end position="330"/>
    </location>
</feature>
<feature type="domain" description="H15 3" evidence="3">
    <location>
        <begin position="337"/>
        <end position="413"/>
    </location>
</feature>
<feature type="region of interest" description="Disordered" evidence="4">
    <location>
        <begin position="30"/>
        <end position="136"/>
    </location>
</feature>
<feature type="region of interest" description="Disordered" evidence="4">
    <location>
        <begin position="142"/>
        <end position="161"/>
    </location>
</feature>
<feature type="region of interest" description="Disordered" evidence="4">
    <location>
        <begin position="229"/>
        <end position="254"/>
    </location>
</feature>
<feature type="region of interest" description="Disordered" evidence="4">
    <location>
        <begin position="420"/>
        <end position="554"/>
    </location>
</feature>
<feature type="short sequence motif" description="PxVxL motif" evidence="1">
    <location>
        <begin position="255"/>
        <end position="259"/>
    </location>
</feature>
<feature type="compositionally biased region" description="Acidic residues" evidence="4">
    <location>
        <begin position="60"/>
        <end position="71"/>
    </location>
</feature>
<feature type="compositionally biased region" description="Polar residues" evidence="4">
    <location>
        <begin position="72"/>
        <end position="93"/>
    </location>
</feature>
<feature type="compositionally biased region" description="Basic and acidic residues" evidence="4">
    <location>
        <begin position="94"/>
        <end position="129"/>
    </location>
</feature>
<feature type="compositionally biased region" description="Polar residues" evidence="4">
    <location>
        <begin position="142"/>
        <end position="156"/>
    </location>
</feature>
<feature type="compositionally biased region" description="Basic residues" evidence="4">
    <location>
        <begin position="238"/>
        <end position="248"/>
    </location>
</feature>
<feature type="compositionally biased region" description="Acidic residues" evidence="4">
    <location>
        <begin position="430"/>
        <end position="451"/>
    </location>
</feature>
<feature type="compositionally biased region" description="Polar residues" evidence="4">
    <location>
        <begin position="464"/>
        <end position="475"/>
    </location>
</feature>
<feature type="compositionally biased region" description="Basic residues" evidence="4">
    <location>
        <begin position="490"/>
        <end position="511"/>
    </location>
</feature>
<feature type="compositionally biased region" description="Basic residues" evidence="4">
    <location>
        <begin position="544"/>
        <end position="554"/>
    </location>
</feature>
<feature type="modified residue" description="N-acetylalanine" evidence="1">
    <location>
        <position position="2"/>
    </location>
</feature>
<feature type="modified residue" description="Phosphoserine" evidence="1">
    <location>
        <position position="6"/>
    </location>
</feature>
<feature type="modified residue" description="Phosphothreonine" evidence="1">
    <location>
        <position position="51"/>
    </location>
</feature>
<feature type="modified residue" description="Phosphothreonine" evidence="2">
    <location>
        <position position="85"/>
    </location>
</feature>
<feature type="modified residue" description="Phosphoserine" evidence="1">
    <location>
        <position position="144"/>
    </location>
</feature>
<feature type="modified residue" description="Phosphoserine" evidence="1">
    <location>
        <position position="157"/>
    </location>
</feature>
<feature type="modified residue" description="Phosphoserine" evidence="1">
    <location>
        <position position="158"/>
    </location>
</feature>
<feature type="modified residue" description="N6-acetyllysine" evidence="9">
    <location>
        <position position="192"/>
    </location>
</feature>
<feature type="modified residue" description="Phosphoserine" evidence="1">
    <location>
        <position position="249"/>
    </location>
</feature>
<feature type="modified residue" description="Phosphoserine" evidence="1">
    <location>
        <position position="443"/>
    </location>
</feature>
<feature type="modified residue" description="Phosphoserine" evidence="1">
    <location>
        <position position="444"/>
    </location>
</feature>
<feature type="modified residue" description="Phosphoserine" evidence="1">
    <location>
        <position position="447"/>
    </location>
</feature>
<feature type="cross-link" description="Glycyl lysine isopeptide (Lys-Gly) (interchain with G-Cter in SUMO2)" evidence="1">
    <location>
        <position position="64"/>
    </location>
</feature>
<feature type="cross-link" description="Glycyl lysine isopeptide (Lys-Gly) (interchain with G-Cter in SUMO2)" evidence="1">
    <location>
        <position position="97"/>
    </location>
</feature>
<feature type="cross-link" description="Glycyl lysine isopeptide (Lys-Gly) (interchain with G-Cter in SUMO2)" evidence="1">
    <location>
        <position position="258"/>
    </location>
</feature>
<feature type="splice variant" id="VSP_034174" description="In isoform 3." evidence="6">
    <location>
        <begin position="1"/>
        <end position="38"/>
    </location>
</feature>
<feature type="splice variant" id="VSP_034175" description="In isoform 2." evidence="6">
    <location>
        <begin position="67"/>
        <end position="79"/>
    </location>
</feature>
<feature type="sequence conflict" description="In Ref. 1; BAE36164." evidence="7" ref="1">
    <original>D</original>
    <variation>N</variation>
    <location>
        <position position="68"/>
    </location>
</feature>
<feature type="sequence conflict" description="In Ref. 4; CAA67961 and 3; AAH20024." evidence="7" ref="4 3">
    <original>N</original>
    <variation>S</variation>
    <location>
        <position position="110"/>
    </location>
</feature>
<feature type="sequence conflict" description="In Ref. 1; BAB23683." evidence="7" ref="1">
    <original>K</original>
    <variation>E</variation>
    <location>
        <position position="111"/>
    </location>
</feature>
<feature type="sequence conflict" description="In Ref. 2; CAM18860/CAM18863." evidence="7" ref="2">
    <original>C</original>
    <variation>S</variation>
    <location>
        <position position="174"/>
    </location>
</feature>
<feature type="sequence conflict" description="In Ref. 4; CAA67961 and 3; AAH04053/AAH20024." evidence="7" ref="4 3">
    <original>G</original>
    <variation>D</variation>
    <location>
        <position position="197"/>
    </location>
</feature>
<feature type="sequence conflict" description="In Ref. 4; CAA67961 and 3; AAH04053/AAH20024." evidence="7" ref="4 3">
    <original>R</original>
    <variation>K</variation>
    <location>
        <position position="219"/>
    </location>
</feature>
<feature type="sequence conflict" description="In Ref. 1; BAC25794." evidence="7" ref="1">
    <location>
        <position position="247"/>
    </location>
</feature>
<feature type="sequence conflict" description="In Ref. 1; BAE38604." evidence="7" ref="1">
    <original>K</original>
    <variation>R</variation>
    <location>
        <position position="403"/>
    </location>
</feature>
<feature type="sequence conflict" description="In Ref. 3; AAH04053/AAH20024." evidence="7" ref="3">
    <original>E</original>
    <variation>D</variation>
    <location>
        <position position="436"/>
    </location>
</feature>
<feature type="sequence conflict" description="In Ref. 3; AAH04053." evidence="7" ref="3">
    <location>
        <begin position="440"/>
        <end position="441"/>
    </location>
</feature>
<feature type="sequence conflict" description="In Ref. 1; BAE36164." evidence="7" ref="1">
    <original>K</original>
    <variation>E</variation>
    <location>
        <position position="547"/>
    </location>
</feature>
<feature type="modified residue" description="Phosphothreonine" evidence="8">
    <location sequence="Q3TEA8-2">
        <position position="72"/>
    </location>
</feature>
<reference key="1">
    <citation type="journal article" date="2005" name="Science">
        <title>The transcriptional landscape of the mammalian genome.</title>
        <authorList>
            <person name="Carninci P."/>
            <person name="Kasukawa T."/>
            <person name="Katayama S."/>
            <person name="Gough J."/>
            <person name="Frith M.C."/>
            <person name="Maeda N."/>
            <person name="Oyama R."/>
            <person name="Ravasi T."/>
            <person name="Lenhard B."/>
            <person name="Wells C."/>
            <person name="Kodzius R."/>
            <person name="Shimokawa K."/>
            <person name="Bajic V.B."/>
            <person name="Brenner S.E."/>
            <person name="Batalov S."/>
            <person name="Forrest A.R."/>
            <person name="Zavolan M."/>
            <person name="Davis M.J."/>
            <person name="Wilming L.G."/>
            <person name="Aidinis V."/>
            <person name="Allen J.E."/>
            <person name="Ambesi-Impiombato A."/>
            <person name="Apweiler R."/>
            <person name="Aturaliya R.N."/>
            <person name="Bailey T.L."/>
            <person name="Bansal M."/>
            <person name="Baxter L."/>
            <person name="Beisel K.W."/>
            <person name="Bersano T."/>
            <person name="Bono H."/>
            <person name="Chalk A.M."/>
            <person name="Chiu K.P."/>
            <person name="Choudhary V."/>
            <person name="Christoffels A."/>
            <person name="Clutterbuck D.R."/>
            <person name="Crowe M.L."/>
            <person name="Dalla E."/>
            <person name="Dalrymple B.P."/>
            <person name="de Bono B."/>
            <person name="Della Gatta G."/>
            <person name="di Bernardo D."/>
            <person name="Down T."/>
            <person name="Engstrom P."/>
            <person name="Fagiolini M."/>
            <person name="Faulkner G."/>
            <person name="Fletcher C.F."/>
            <person name="Fukushima T."/>
            <person name="Furuno M."/>
            <person name="Futaki S."/>
            <person name="Gariboldi M."/>
            <person name="Georgii-Hemming P."/>
            <person name="Gingeras T.R."/>
            <person name="Gojobori T."/>
            <person name="Green R.E."/>
            <person name="Gustincich S."/>
            <person name="Harbers M."/>
            <person name="Hayashi Y."/>
            <person name="Hensch T.K."/>
            <person name="Hirokawa N."/>
            <person name="Hill D."/>
            <person name="Huminiecki L."/>
            <person name="Iacono M."/>
            <person name="Ikeo K."/>
            <person name="Iwama A."/>
            <person name="Ishikawa T."/>
            <person name="Jakt M."/>
            <person name="Kanapin A."/>
            <person name="Katoh M."/>
            <person name="Kawasawa Y."/>
            <person name="Kelso J."/>
            <person name="Kitamura H."/>
            <person name="Kitano H."/>
            <person name="Kollias G."/>
            <person name="Krishnan S.P."/>
            <person name="Kruger A."/>
            <person name="Kummerfeld S.K."/>
            <person name="Kurochkin I.V."/>
            <person name="Lareau L.F."/>
            <person name="Lazarevic D."/>
            <person name="Lipovich L."/>
            <person name="Liu J."/>
            <person name="Liuni S."/>
            <person name="McWilliam S."/>
            <person name="Madan Babu M."/>
            <person name="Madera M."/>
            <person name="Marchionni L."/>
            <person name="Matsuda H."/>
            <person name="Matsuzawa S."/>
            <person name="Miki H."/>
            <person name="Mignone F."/>
            <person name="Miyake S."/>
            <person name="Morris K."/>
            <person name="Mottagui-Tabar S."/>
            <person name="Mulder N."/>
            <person name="Nakano N."/>
            <person name="Nakauchi H."/>
            <person name="Ng P."/>
            <person name="Nilsson R."/>
            <person name="Nishiguchi S."/>
            <person name="Nishikawa S."/>
            <person name="Nori F."/>
            <person name="Ohara O."/>
            <person name="Okazaki Y."/>
            <person name="Orlando V."/>
            <person name="Pang K.C."/>
            <person name="Pavan W.J."/>
            <person name="Pavesi G."/>
            <person name="Pesole G."/>
            <person name="Petrovsky N."/>
            <person name="Piazza S."/>
            <person name="Reed J."/>
            <person name="Reid J.F."/>
            <person name="Ring B.Z."/>
            <person name="Ringwald M."/>
            <person name="Rost B."/>
            <person name="Ruan Y."/>
            <person name="Salzberg S.L."/>
            <person name="Sandelin A."/>
            <person name="Schneider C."/>
            <person name="Schoenbach C."/>
            <person name="Sekiguchi K."/>
            <person name="Semple C.A."/>
            <person name="Seno S."/>
            <person name="Sessa L."/>
            <person name="Sheng Y."/>
            <person name="Shibata Y."/>
            <person name="Shimada H."/>
            <person name="Shimada K."/>
            <person name="Silva D."/>
            <person name="Sinclair B."/>
            <person name="Sperling S."/>
            <person name="Stupka E."/>
            <person name="Sugiura K."/>
            <person name="Sultana R."/>
            <person name="Takenaka Y."/>
            <person name="Taki K."/>
            <person name="Tammoja K."/>
            <person name="Tan S.L."/>
            <person name="Tang S."/>
            <person name="Taylor M.S."/>
            <person name="Tegner J."/>
            <person name="Teichmann S.A."/>
            <person name="Ueda H.R."/>
            <person name="van Nimwegen E."/>
            <person name="Verardo R."/>
            <person name="Wei C.L."/>
            <person name="Yagi K."/>
            <person name="Yamanishi H."/>
            <person name="Zabarovsky E."/>
            <person name="Zhu S."/>
            <person name="Zimmer A."/>
            <person name="Hide W."/>
            <person name="Bult C."/>
            <person name="Grimmond S.M."/>
            <person name="Teasdale R.D."/>
            <person name="Liu E.T."/>
            <person name="Brusic V."/>
            <person name="Quackenbush J."/>
            <person name="Wahlestedt C."/>
            <person name="Mattick J.S."/>
            <person name="Hume D.A."/>
            <person name="Kai C."/>
            <person name="Sasaki D."/>
            <person name="Tomaru Y."/>
            <person name="Fukuda S."/>
            <person name="Kanamori-Katayama M."/>
            <person name="Suzuki M."/>
            <person name="Aoki J."/>
            <person name="Arakawa T."/>
            <person name="Iida J."/>
            <person name="Imamura K."/>
            <person name="Itoh M."/>
            <person name="Kato T."/>
            <person name="Kawaji H."/>
            <person name="Kawagashira N."/>
            <person name="Kawashima T."/>
            <person name="Kojima M."/>
            <person name="Kondo S."/>
            <person name="Konno H."/>
            <person name="Nakano K."/>
            <person name="Ninomiya N."/>
            <person name="Nishio T."/>
            <person name="Okada M."/>
            <person name="Plessy C."/>
            <person name="Shibata K."/>
            <person name="Shiraki T."/>
            <person name="Suzuki S."/>
            <person name="Tagami M."/>
            <person name="Waki K."/>
            <person name="Watahiki A."/>
            <person name="Okamura-Oho Y."/>
            <person name="Suzuki H."/>
            <person name="Kawai J."/>
            <person name="Hayashizaki Y."/>
        </authorList>
    </citation>
    <scope>NUCLEOTIDE SEQUENCE [LARGE SCALE MRNA] (ISOFORMS 1; 2 AND 3)</scope>
    <source>
        <strain>C57BL/6J</strain>
        <strain>NOD</strain>
        <tissue>Cerebellum</tissue>
        <tissue>Liver</tissue>
        <tissue>Lung</tissue>
        <tissue>Skin</tissue>
        <tissue>Thymus</tissue>
    </source>
</reference>
<reference key="2">
    <citation type="journal article" date="2009" name="PLoS Biol.">
        <title>Lineage-specific biology revealed by a finished genome assembly of the mouse.</title>
        <authorList>
            <person name="Church D.M."/>
            <person name="Goodstadt L."/>
            <person name="Hillier L.W."/>
            <person name="Zody M.C."/>
            <person name="Goldstein S."/>
            <person name="She X."/>
            <person name="Bult C.J."/>
            <person name="Agarwala R."/>
            <person name="Cherry J.L."/>
            <person name="DiCuccio M."/>
            <person name="Hlavina W."/>
            <person name="Kapustin Y."/>
            <person name="Meric P."/>
            <person name="Maglott D."/>
            <person name="Birtle Z."/>
            <person name="Marques A.C."/>
            <person name="Graves T."/>
            <person name="Zhou S."/>
            <person name="Teague B."/>
            <person name="Potamousis K."/>
            <person name="Churas C."/>
            <person name="Place M."/>
            <person name="Herschleb J."/>
            <person name="Runnheim R."/>
            <person name="Forrest D."/>
            <person name="Amos-Landgraf J."/>
            <person name="Schwartz D.C."/>
            <person name="Cheng Z."/>
            <person name="Lindblad-Toh K."/>
            <person name="Eichler E.E."/>
            <person name="Ponting C.P."/>
        </authorList>
    </citation>
    <scope>NUCLEOTIDE SEQUENCE [LARGE SCALE GENOMIC DNA]</scope>
    <source>
        <strain>C57BL/6J</strain>
    </source>
</reference>
<reference key="3">
    <citation type="journal article" date="2004" name="Genome Res.">
        <title>The status, quality, and expansion of the NIH full-length cDNA project: the Mammalian Gene Collection (MGC).</title>
        <authorList>
            <consortium name="The MGC Project Team"/>
        </authorList>
    </citation>
    <scope>NUCLEOTIDE SEQUENCE [LARGE SCALE MRNA] (ISOFORM 1)</scope>
    <source>
        <strain>FVB/N</strain>
        <tissue>Mammary tumor</tissue>
    </source>
</reference>
<reference key="4">
    <citation type="journal article" date="1996" name="EMBO J.">
        <title>A possible involvement of TIF1 alpha and TIF1 beta in the epigenetic control of transcription by nuclear receptors.</title>
        <authorList>
            <person name="le Douarin B."/>
            <person name="Nielsen A.L."/>
            <person name="Garnier J.-M."/>
            <person name="Ichinose H."/>
            <person name="Jeanmougin F."/>
            <person name="Losson R."/>
            <person name="Chambon P."/>
        </authorList>
    </citation>
    <scope>NUCLEOTIDE SEQUENCE [MRNA] OF 43-324</scope>
    <scope>FUNCTION</scope>
    <scope>INTERACTION WITH CBX5</scope>
</reference>
<reference key="5">
    <citation type="journal article" date="2010" name="Cell">
        <title>A tissue-specific atlas of mouse protein phosphorylation and expression.</title>
        <authorList>
            <person name="Huttlin E.L."/>
            <person name="Jedrychowski M.P."/>
            <person name="Elias J.E."/>
            <person name="Goswami T."/>
            <person name="Rad R."/>
            <person name="Beausoleil S.A."/>
            <person name="Villen J."/>
            <person name="Haas W."/>
            <person name="Sowa M.E."/>
            <person name="Gygi S.P."/>
        </authorList>
    </citation>
    <scope>PHOSPHORYLATION [LARGE SCALE ANALYSIS] AT THR-72 (ISOFORM 2)</scope>
    <scope>IDENTIFICATION BY MASS SPECTROMETRY [LARGE SCALE ANALYSIS]</scope>
    <source>
        <tissue>Brain</tissue>
        <tissue>Kidney</tissue>
        <tissue>Lung</tissue>
        <tissue>Pancreas</tissue>
        <tissue>Spleen</tissue>
    </source>
</reference>
<reference key="6">
    <citation type="journal article" date="2013" name="Mol. Cell">
        <title>SIRT5-mediated lysine desuccinylation impacts diverse metabolic pathways.</title>
        <authorList>
            <person name="Park J."/>
            <person name="Chen Y."/>
            <person name="Tishkoff D.X."/>
            <person name="Peng C."/>
            <person name="Tan M."/>
            <person name="Dai L."/>
            <person name="Xie Z."/>
            <person name="Zhang Y."/>
            <person name="Zwaans B.M."/>
            <person name="Skinner M.E."/>
            <person name="Lombard D.B."/>
            <person name="Zhao Y."/>
        </authorList>
    </citation>
    <scope>ACETYLATION [LARGE SCALE ANALYSIS] AT LYS-192</scope>
    <scope>IDENTIFICATION BY MASS SPECTROMETRY [LARGE SCALE ANALYSIS]</scope>
    <source>
        <tissue>Embryonic fibroblast</tissue>
    </source>
</reference>